<proteinExistence type="evidence at transcript level"/>
<accession>C9K1M9</accession>
<gene>
    <name type="primary">ACTT2-2</name>
</gene>
<evidence type="ECO:0000250" key="1">
    <source>
        <dbReference type="UniProtKB" id="O93801"/>
    </source>
</evidence>
<evidence type="ECO:0000269" key="2">
    <source>
    </source>
</evidence>
<evidence type="ECO:0000269" key="3">
    <source>
    </source>
</evidence>
<evidence type="ECO:0000269" key="4">
    <source>
    </source>
</evidence>
<evidence type="ECO:0000269" key="5">
    <source>
    </source>
</evidence>
<evidence type="ECO:0000269" key="6">
    <source>
    </source>
</evidence>
<evidence type="ECO:0000269" key="7">
    <source>
    </source>
</evidence>
<evidence type="ECO:0000303" key="8">
    <source>
    </source>
</evidence>
<evidence type="ECO:0000303" key="9">
    <source>
    </source>
</evidence>
<evidence type="ECO:0000305" key="10"/>
<evidence type="ECO:0000305" key="11">
    <source>
    </source>
</evidence>
<protein>
    <recommendedName>
        <fullName evidence="8">Abhydrolase domain-containing protein ACTT2-2</fullName>
        <ecNumber evidence="11">3.1.1.-</ecNumber>
    </recommendedName>
    <alternativeName>
        <fullName evidence="8">ACT-toxin biosynthesis protein 2-2</fullName>
    </alternativeName>
</protein>
<reference key="1">
    <citation type="journal article" date="2008" name="Mol. Plant Microbe Interact.">
        <title>Functional analysis of a multicopy host-selective ACT-toxin biosynthesis gene in the tangerine pathotype of Alternaria alternata using RNA silencing.</title>
        <authorList>
            <person name="Miyamoto Y."/>
            <person name="Masunaka A."/>
            <person name="Tsuge T."/>
            <person name="Yamamoto M."/>
            <person name="Ohtani K."/>
            <person name="Fukumoto T."/>
            <person name="Gomi K."/>
            <person name="Peever T.L."/>
            <person name="Akimitsu K."/>
        </authorList>
    </citation>
    <scope>NUCLEOTIDE SEQUENCE [GENOMIC DNA]</scope>
    <scope>FUNCTION</scope>
    <scope>DISRUPTION PHENOTYPE</scope>
    <source>
        <strain>BC3-5-1-OS2A</strain>
    </source>
</reference>
<reference key="2">
    <citation type="journal article" date="2000" name="Phytopathology">
        <title>Distribution and characterization of AKT homologs in the tangerine pathotype of Alternaria alternata.</title>
        <authorList>
            <person name="Masunaka A."/>
            <person name="Tanaka A."/>
            <person name="Tsuge T."/>
            <person name="Peever T.L."/>
            <person name="Timmer L.W."/>
            <person name="Yamamoto M."/>
            <person name="Yamamoto H."/>
            <person name="Akimitsu K."/>
        </authorList>
    </citation>
    <scope>FUNCTION</scope>
</reference>
<reference key="3">
    <citation type="journal article" date="2009" name="Phytopathology">
        <title>Function of genes encoding acyl-CoA synthetase and enoyl-CoA hydratase for host-selective act-toxin biosynthesis in the tangerine pathotype of Alternaria alternata.</title>
        <authorList>
            <person name="Miyamoto M."/>
            <person name="Ishii Y."/>
            <person name="Honda A."/>
            <person name="Masunaka A."/>
            <person name="Tsuge T."/>
            <person name="Yamamoto M."/>
            <person name="Ohtani K."/>
            <person name="Fukumoto T."/>
            <person name="Gomi K."/>
            <person name="Peever T.L."/>
            <person name="Akimitsu K."/>
        </authorList>
    </citation>
    <scope>FUNCTION</scope>
    <source>
        <strain>SH20</strain>
    </source>
</reference>
<reference key="4">
    <citation type="journal article" date="2010" name="Phytopathology">
        <title>Role of the host-selective ACT-toxin synthesis gene ACTTS2 encoding an enoyl-reductase in pathogenicity of the tangerine pathotype of Alternaria alternata.</title>
        <authorList>
            <person name="Ajiro N."/>
            <person name="Miyamoto Y."/>
            <person name="Masunaka A."/>
            <person name="Tsuge T."/>
            <person name="Yamamoto M."/>
            <person name="Ohtani K."/>
            <person name="Fukumoto T."/>
            <person name="Gomi K."/>
            <person name="Peever T.L."/>
            <person name="Izumi Y."/>
            <person name="Tada Y."/>
            <person name="Akimitsu K."/>
        </authorList>
    </citation>
    <scope>FUNCTION</scope>
    <source>
        <strain>SH20</strain>
    </source>
</reference>
<reference key="5">
    <citation type="journal article" date="2010" name="Mol. Plant Microbe Interact.">
        <title>ACTTS3 encoding a polyketide synthase is essential for the biosynthesis of ACT-toxin and pathogenicity in the tangerine pathotype of Alternaria alternata.</title>
        <authorList>
            <person name="Miyamoto Y."/>
            <person name="Masunaka A."/>
            <person name="Tsuge T."/>
            <person name="Yamamoto M."/>
            <person name="Ohtani K."/>
            <person name="Fukumoto T."/>
            <person name="Gomi K."/>
            <person name="Peever T.L."/>
            <person name="Tada Y."/>
            <person name="Ichimura K."/>
            <person name="Akimitsu K."/>
        </authorList>
    </citation>
    <scope>FUNCTION</scope>
    <source>
        <strain>SH20</strain>
    </source>
</reference>
<reference key="6">
    <citation type="journal article" date="2013" name="FEMS Microbiol. Rev.">
        <title>Host-selective toxins produced by the plant pathogenic fungus Alternaria alternata.</title>
        <authorList>
            <person name="Tsuge T."/>
            <person name="Harimoto Y."/>
            <person name="Akimitsu K."/>
            <person name="Ohtani K."/>
            <person name="Kodama M."/>
            <person name="Akagi Y."/>
            <person name="Egusa M."/>
            <person name="Yamamoto M."/>
            <person name="Otani H."/>
        </authorList>
    </citation>
    <scope>REVIEW ON HOST-SELECTIVE TOXINS</scope>
</reference>
<reference key="7">
    <citation type="journal article" date="2018" name="Front. Microbiol.">
        <title>Csn5 is required for the conidiogenesis and pathogenesis of the Alternaria alternata tangerine pathotype.</title>
        <authorList>
            <person name="Wang M."/>
            <person name="Yang X."/>
            <person name="Ruan R."/>
            <person name="Fu H."/>
            <person name="Li H."/>
        </authorList>
    </citation>
    <scope>INDUCTION</scope>
</reference>
<feature type="chain" id="PRO_0000444828" description="Abhydrolase domain-containing protein ACTT2-2">
    <location>
        <begin position="1"/>
        <end position="262"/>
    </location>
</feature>
<feature type="short sequence motif" description="Peroxisomal targeting signal type 1" evidence="1">
    <location>
        <begin position="260"/>
        <end position="262"/>
    </location>
</feature>
<keyword id="KW-0378">Hydrolase</keyword>
<keyword id="KW-0576">Peroxisome</keyword>
<keyword id="KW-0843">Virulence</keyword>
<sequence>MQQPIVGVGHSMGGCQIATLSVTSRRIFSTMILLDPAIGPPEMGLATLGLGQLTLRRRTQWLTREDAEKALRTSFSTWDPQVLDLLIKHSIHSDKQSVEMEDGPVSLVTGRYQELVNYIKPSFIRSGKVVGQELVHQTGPVDMYHMLGLVTCSTLYLCGGESTLSTPRARELWLSRTAELSYSKDPGEMRKVDERIVPDTGHFLPMEEPKECADIIADWIDKDECMIWNCHIGKQGKIWRDLSNTNRKMNAEVWIEYLQSKL</sequence>
<name>ACT22_ALTAL</name>
<dbReference type="EC" id="3.1.1.-" evidence="11"/>
<dbReference type="EMBL" id="AB432916">
    <property type="protein sequence ID" value="BAI44323.1"/>
    <property type="molecule type" value="Genomic_DNA"/>
</dbReference>
<dbReference type="SMR" id="C9K1M9"/>
<dbReference type="VEuPathDB" id="FungiDB:CC77DRAFT_959939"/>
<dbReference type="GO" id="GO:0005777">
    <property type="term" value="C:peroxisome"/>
    <property type="evidence" value="ECO:0007669"/>
    <property type="project" value="UniProtKB-SubCell"/>
</dbReference>
<dbReference type="GO" id="GO:0016787">
    <property type="term" value="F:hydrolase activity"/>
    <property type="evidence" value="ECO:0007669"/>
    <property type="project" value="UniProtKB-KW"/>
</dbReference>
<dbReference type="Gene3D" id="3.40.50.1820">
    <property type="entry name" value="alpha/beta hydrolase"/>
    <property type="match status" value="1"/>
</dbReference>
<dbReference type="InterPro" id="IPR000073">
    <property type="entry name" value="AB_hydrolase_1"/>
</dbReference>
<dbReference type="InterPro" id="IPR029058">
    <property type="entry name" value="AB_hydrolase_fold"/>
</dbReference>
<dbReference type="Pfam" id="PF12697">
    <property type="entry name" value="Abhydrolase_6"/>
    <property type="match status" value="1"/>
</dbReference>
<dbReference type="SUPFAM" id="SSF53474">
    <property type="entry name" value="alpha/beta-Hydrolases"/>
    <property type="match status" value="1"/>
</dbReference>
<organism>
    <name type="scientific">Alternaria alternata</name>
    <name type="common">Alternaria rot fungus</name>
    <name type="synonym">Torula alternata</name>
    <dbReference type="NCBI Taxonomy" id="5599"/>
    <lineage>
        <taxon>Eukaryota</taxon>
        <taxon>Fungi</taxon>
        <taxon>Dikarya</taxon>
        <taxon>Ascomycota</taxon>
        <taxon>Pezizomycotina</taxon>
        <taxon>Dothideomycetes</taxon>
        <taxon>Pleosporomycetidae</taxon>
        <taxon>Pleosporales</taxon>
        <taxon>Pleosporineae</taxon>
        <taxon>Pleosporaceae</taxon>
        <taxon>Alternaria</taxon>
        <taxon>Alternaria sect. Alternaria</taxon>
        <taxon>Alternaria alternata complex</taxon>
    </lineage>
</organism>
<comment type="function">
    <text evidence="2 3 4 5 6 9">Abhydrolase domain-containing protein; part of the gene clusters that mediate the biosynthesis of the host-selective toxins (HSTs) ACT-toxins responsible for brown spot of tangerine disease by the tangerine pathotype which affects tangerines and mandarins (PubMed:18944496, PubMed:18986255). ACT-toxins consist of three moieties, 9,10-epoxy-8-hydroxy-9-methyl-decatrienoic acid (EDA), valine and a polyketide (PubMed:22846083). ACT-toxin I is toxic to both citrus and pear; toxin II the 5''-deoxy derivative of ACT-toxin I, is highly toxic to pear and slightly toxic to citrus (PubMed:22846083). On cellular level, ACT-toxins affect plasma membrane of susceptible cells and cause a sudden increase in loss of K(+) after a few minutes of toxin treatment (PubMed:22846083). The acyl-CoA ligase ACTT1, the hydrolase ACTT2, the enoyl-CoA hydratases ACTT3 and ACTT6, and the acyl-CoA synthetase ACTT5 are all involved in the biosynthesis of the AK-, AF- and ACT-toxin common 9,10-epoxy-8-hydroxy-9-methyl-decatrienoic acid (EDA) structural moiety (PubMed:18944496, PubMed:18986255, PubMed:19271978). The exact role of each enzyme, and of additional enzymes identified within the AF-toxin clusters have still to be determined (PubMed:18944496, PubMed:18986255, PubMed:19271978). On the other hand, ACTTS1 to ACTTS4 are specific to the tangerine pathotype (PubMed:22846083). The function of ACTTS3 is to elongate the polyketide chain portion of ACT-toxin that is unique to this toxin (PubMed:20192828). The enoyl-reductase ACTTS2 might complement the missing enoyl-reductase (ER) domain in ACTTS3 in the synthesis of the polyketide portion of ACT-toxin (PubMed:20055645). The roles of the nonribosomal peptide synthetases-related proteins ACTTS1 and ACTTS4 have also still not been elucidated (PubMed:22846083).</text>
</comment>
<comment type="pathway">
    <text evidence="3">Mycotoxin biosynthesis.</text>
</comment>
<comment type="subcellular location">
    <subcellularLocation>
        <location evidence="1">Peroxisome</location>
    </subcellularLocation>
    <text evidence="1">The peroxisomal location requires the C-terminal tripeptide peroxisomal targeting signal.</text>
</comment>
<comment type="induction">
    <text evidence="7">Expression is positively regulated by CSN5 during infection.</text>
</comment>
<comment type="disruption phenotype">
    <text evidence="3">Abolishes the production of ACT-toxin and impairs the formation of lesions on leaves sprayed with conidia (PubMed:18986255). Does not affect growth rate of cultures, sporulation, and spore germination (PubMed:18986255).</text>
</comment>
<comment type="miscellaneous">
    <text evidence="3">Gene clusters encoding host-selective toxins (HSTs) are localized on conditionally dispensable chromosomes (CDCs), also called supernumerary chromosomes, where they are present in multiple copies (PubMed:18986255). The CDCs are not essential for saprophytic growth but controls host-selective pathogenicity (PubMed:18986255). Although conventional disruption of ACTT2 could not be accomplished due to the high number of the copies identified in the genome, the high sequence identity among these copies of ACTT2 is likely an advantage for RNA silencing, because it allows knockdown of all copies of this gene simultaneously (PubMed:18986255).</text>
</comment>
<comment type="similarity">
    <text evidence="10">Belongs to the AB hydrolase superfamily. AKT2 hydrolase family.</text>
</comment>